<accession>O26292</accession>
<protein>
    <recommendedName>
        <fullName evidence="1">Pyridoxal 5'-phosphate synthase subunit PdxT</fullName>
        <ecNumber evidence="1">4.3.3.6</ecNumber>
    </recommendedName>
    <alternativeName>
        <fullName evidence="1">Pdx2</fullName>
    </alternativeName>
    <alternativeName>
        <fullName evidence="1">Pyridoxal 5'-phosphate synthase glutaminase subunit</fullName>
        <ecNumber evidence="1">3.5.1.2</ecNumber>
    </alternativeName>
</protein>
<proteinExistence type="inferred from homology"/>
<evidence type="ECO:0000255" key="1">
    <source>
        <dbReference type="HAMAP-Rule" id="MF_01615"/>
    </source>
</evidence>
<keyword id="KW-0315">Glutamine amidotransferase</keyword>
<keyword id="KW-0378">Hydrolase</keyword>
<keyword id="KW-0456">Lyase</keyword>
<keyword id="KW-0663">Pyridoxal phosphate</keyword>
<keyword id="KW-1185">Reference proteome</keyword>
<dbReference type="EC" id="4.3.3.6" evidence="1"/>
<dbReference type="EC" id="3.5.1.2" evidence="1"/>
<dbReference type="EMBL" id="AE000666">
    <property type="protein sequence ID" value="AAB84696.1"/>
    <property type="molecule type" value="Genomic_DNA"/>
</dbReference>
<dbReference type="PIR" id="F69120">
    <property type="entry name" value="F69120"/>
</dbReference>
<dbReference type="RefSeq" id="WP_010875829.1">
    <property type="nucleotide sequence ID" value="NC_000916.1"/>
</dbReference>
<dbReference type="SMR" id="O26292"/>
<dbReference type="FunCoup" id="O26292">
    <property type="interactions" value="122"/>
</dbReference>
<dbReference type="STRING" id="187420.MTH_190"/>
<dbReference type="PaxDb" id="187420-MTH_190"/>
<dbReference type="EnsemblBacteria" id="AAB84696">
    <property type="protein sequence ID" value="AAB84696"/>
    <property type="gene ID" value="MTH_190"/>
</dbReference>
<dbReference type="GeneID" id="82296667"/>
<dbReference type="KEGG" id="mth:MTH_190"/>
<dbReference type="PATRIC" id="fig|187420.15.peg.161"/>
<dbReference type="HOGENOM" id="CLU_069674_2_0_2"/>
<dbReference type="InParanoid" id="O26292"/>
<dbReference type="UniPathway" id="UPA00245"/>
<dbReference type="Proteomes" id="UP000005223">
    <property type="component" value="Chromosome"/>
</dbReference>
<dbReference type="GO" id="GO:0005829">
    <property type="term" value="C:cytosol"/>
    <property type="evidence" value="ECO:0007669"/>
    <property type="project" value="TreeGrafter"/>
</dbReference>
<dbReference type="GO" id="GO:1903600">
    <property type="term" value="C:glutaminase complex"/>
    <property type="evidence" value="ECO:0007669"/>
    <property type="project" value="TreeGrafter"/>
</dbReference>
<dbReference type="GO" id="GO:0004359">
    <property type="term" value="F:glutaminase activity"/>
    <property type="evidence" value="ECO:0007669"/>
    <property type="project" value="UniProtKB-UniRule"/>
</dbReference>
<dbReference type="GO" id="GO:0036381">
    <property type="term" value="F:pyridoxal 5'-phosphate synthase (glutamine hydrolysing) activity"/>
    <property type="evidence" value="ECO:0007669"/>
    <property type="project" value="UniProtKB-UniRule"/>
</dbReference>
<dbReference type="GO" id="GO:0006543">
    <property type="term" value="P:glutamine catabolic process"/>
    <property type="evidence" value="ECO:0007669"/>
    <property type="project" value="UniProtKB-UniRule"/>
</dbReference>
<dbReference type="GO" id="GO:0042823">
    <property type="term" value="P:pyridoxal phosphate biosynthetic process"/>
    <property type="evidence" value="ECO:0007669"/>
    <property type="project" value="UniProtKB-UniRule"/>
</dbReference>
<dbReference type="GO" id="GO:0008614">
    <property type="term" value="P:pyridoxine metabolic process"/>
    <property type="evidence" value="ECO:0007669"/>
    <property type="project" value="TreeGrafter"/>
</dbReference>
<dbReference type="CDD" id="cd01749">
    <property type="entry name" value="GATase1_PB"/>
    <property type="match status" value="1"/>
</dbReference>
<dbReference type="FunFam" id="3.40.50.880:FF:000010">
    <property type="entry name" value="uncharacterized protein LOC100176842 isoform X2"/>
    <property type="match status" value="1"/>
</dbReference>
<dbReference type="Gene3D" id="3.40.50.880">
    <property type="match status" value="1"/>
</dbReference>
<dbReference type="HAMAP" id="MF_01615">
    <property type="entry name" value="PdxT"/>
    <property type="match status" value="1"/>
</dbReference>
<dbReference type="InterPro" id="IPR029062">
    <property type="entry name" value="Class_I_gatase-like"/>
</dbReference>
<dbReference type="InterPro" id="IPR002161">
    <property type="entry name" value="PdxT/SNO"/>
</dbReference>
<dbReference type="NCBIfam" id="TIGR03800">
    <property type="entry name" value="PLP_synth_Pdx2"/>
    <property type="match status" value="1"/>
</dbReference>
<dbReference type="PANTHER" id="PTHR31559">
    <property type="entry name" value="PYRIDOXAL 5'-PHOSPHATE SYNTHASE SUBUNIT SNO"/>
    <property type="match status" value="1"/>
</dbReference>
<dbReference type="PANTHER" id="PTHR31559:SF0">
    <property type="entry name" value="PYRIDOXAL 5'-PHOSPHATE SYNTHASE SUBUNIT SNO1-RELATED"/>
    <property type="match status" value="1"/>
</dbReference>
<dbReference type="Pfam" id="PF01174">
    <property type="entry name" value="SNO"/>
    <property type="match status" value="1"/>
</dbReference>
<dbReference type="PIRSF" id="PIRSF005639">
    <property type="entry name" value="Glut_amidoT_SNO"/>
    <property type="match status" value="1"/>
</dbReference>
<dbReference type="SUPFAM" id="SSF52317">
    <property type="entry name" value="Class I glutamine amidotransferase-like"/>
    <property type="match status" value="1"/>
</dbReference>
<dbReference type="PROSITE" id="PS51130">
    <property type="entry name" value="PDXT_SNO_2"/>
    <property type="match status" value="1"/>
</dbReference>
<sequence>MIRIGILALQGDVSEHLEMTRRTVEEMGIDAEVVRVRTAEEASTVDAIIISGGESTVIGRLMEETGIKDVIIREKKPVMGTCAGMVLLADETDYEQPLLGLIDMKVKRNAFGRQRDSFEDEIDILGRKFHGIFIRAPAVLEVGEGVEVLSELDDMIIAVKDGCNLALAFHPELGEDTGLHEYFIKEVLNCVE</sequence>
<comment type="function">
    <text evidence="1">Catalyzes the hydrolysis of glutamine to glutamate and ammonia as part of the biosynthesis of pyridoxal 5'-phosphate. The resulting ammonia molecule is channeled to the active site of PdxS.</text>
</comment>
<comment type="catalytic activity">
    <reaction evidence="1">
        <text>aldehydo-D-ribose 5-phosphate + D-glyceraldehyde 3-phosphate + L-glutamine = pyridoxal 5'-phosphate + L-glutamate + phosphate + 3 H2O + H(+)</text>
        <dbReference type="Rhea" id="RHEA:31507"/>
        <dbReference type="ChEBI" id="CHEBI:15377"/>
        <dbReference type="ChEBI" id="CHEBI:15378"/>
        <dbReference type="ChEBI" id="CHEBI:29985"/>
        <dbReference type="ChEBI" id="CHEBI:43474"/>
        <dbReference type="ChEBI" id="CHEBI:58273"/>
        <dbReference type="ChEBI" id="CHEBI:58359"/>
        <dbReference type="ChEBI" id="CHEBI:59776"/>
        <dbReference type="ChEBI" id="CHEBI:597326"/>
        <dbReference type="EC" id="4.3.3.6"/>
    </reaction>
</comment>
<comment type="catalytic activity">
    <reaction evidence="1">
        <text>L-glutamine + H2O = L-glutamate + NH4(+)</text>
        <dbReference type="Rhea" id="RHEA:15889"/>
        <dbReference type="ChEBI" id="CHEBI:15377"/>
        <dbReference type="ChEBI" id="CHEBI:28938"/>
        <dbReference type="ChEBI" id="CHEBI:29985"/>
        <dbReference type="ChEBI" id="CHEBI:58359"/>
        <dbReference type="EC" id="3.5.1.2"/>
    </reaction>
</comment>
<comment type="pathway">
    <text evidence="1">Cofactor biosynthesis; pyridoxal 5'-phosphate biosynthesis.</text>
</comment>
<comment type="subunit">
    <text evidence="1">In the presence of PdxS, forms a dodecamer of heterodimers. Only shows activity in the heterodimer.</text>
</comment>
<comment type="similarity">
    <text evidence="1">Belongs to the glutaminase PdxT/SNO family.</text>
</comment>
<name>PDXT_METTH</name>
<feature type="chain" id="PRO_0000135684" description="Pyridoxal 5'-phosphate synthase subunit PdxT">
    <location>
        <begin position="1"/>
        <end position="192"/>
    </location>
</feature>
<feature type="active site" description="Nucleophile" evidence="1">
    <location>
        <position position="82"/>
    </location>
</feature>
<feature type="active site" description="Charge relay system" evidence="1">
    <location>
        <position position="170"/>
    </location>
</feature>
<feature type="active site" description="Charge relay system" evidence="1">
    <location>
        <position position="172"/>
    </location>
</feature>
<feature type="binding site" evidence="1">
    <location>
        <begin position="53"/>
        <end position="55"/>
    </location>
    <ligand>
        <name>L-glutamine</name>
        <dbReference type="ChEBI" id="CHEBI:58359"/>
    </ligand>
</feature>
<feature type="binding site" evidence="1">
    <location>
        <position position="108"/>
    </location>
    <ligand>
        <name>L-glutamine</name>
        <dbReference type="ChEBI" id="CHEBI:58359"/>
    </ligand>
</feature>
<feature type="binding site" evidence="1">
    <location>
        <begin position="134"/>
        <end position="135"/>
    </location>
    <ligand>
        <name>L-glutamine</name>
        <dbReference type="ChEBI" id="CHEBI:58359"/>
    </ligand>
</feature>
<organism>
    <name type="scientific">Methanothermobacter thermautotrophicus (strain ATCC 29096 / DSM 1053 / JCM 10044 / NBRC 100330 / Delta H)</name>
    <name type="common">Methanobacterium thermoautotrophicum</name>
    <dbReference type="NCBI Taxonomy" id="187420"/>
    <lineage>
        <taxon>Archaea</taxon>
        <taxon>Methanobacteriati</taxon>
        <taxon>Methanobacteriota</taxon>
        <taxon>Methanomada group</taxon>
        <taxon>Methanobacteria</taxon>
        <taxon>Methanobacteriales</taxon>
        <taxon>Methanobacteriaceae</taxon>
        <taxon>Methanothermobacter</taxon>
    </lineage>
</organism>
<gene>
    <name evidence="1" type="primary">pdxT</name>
    <name type="ordered locus">MTH_190</name>
</gene>
<reference key="1">
    <citation type="journal article" date="1997" name="J. Bacteriol.">
        <title>Complete genome sequence of Methanobacterium thermoautotrophicum deltaH: functional analysis and comparative genomics.</title>
        <authorList>
            <person name="Smith D.R."/>
            <person name="Doucette-Stamm L.A."/>
            <person name="Deloughery C."/>
            <person name="Lee H.-M."/>
            <person name="Dubois J."/>
            <person name="Aldredge T."/>
            <person name="Bashirzadeh R."/>
            <person name="Blakely D."/>
            <person name="Cook R."/>
            <person name="Gilbert K."/>
            <person name="Harrison D."/>
            <person name="Hoang L."/>
            <person name="Keagle P."/>
            <person name="Lumm W."/>
            <person name="Pothier B."/>
            <person name="Qiu D."/>
            <person name="Spadafora R."/>
            <person name="Vicare R."/>
            <person name="Wang Y."/>
            <person name="Wierzbowski J."/>
            <person name="Gibson R."/>
            <person name="Jiwani N."/>
            <person name="Caruso A."/>
            <person name="Bush D."/>
            <person name="Safer H."/>
            <person name="Patwell D."/>
            <person name="Prabhakar S."/>
            <person name="McDougall S."/>
            <person name="Shimer G."/>
            <person name="Goyal A."/>
            <person name="Pietrovski S."/>
            <person name="Church G.M."/>
            <person name="Daniels C.J."/>
            <person name="Mao J.-I."/>
            <person name="Rice P."/>
            <person name="Noelling J."/>
            <person name="Reeve J.N."/>
        </authorList>
    </citation>
    <scope>NUCLEOTIDE SEQUENCE [LARGE SCALE GENOMIC DNA]</scope>
    <source>
        <strain>ATCC 29096 / DSM 1053 / JCM 10044 / NBRC 100330 / Delta H</strain>
    </source>
</reference>